<comment type="function">
    <text evidence="1">Specifically catalyzes the decarboxylation of L-arginine to agmatine. Has no S-adenosylmethionine decarboxylase (AdoMetDC) activity.</text>
</comment>
<comment type="catalytic activity">
    <reaction evidence="1">
        <text>L-arginine + H(+) = agmatine + CO2</text>
        <dbReference type="Rhea" id="RHEA:17641"/>
        <dbReference type="ChEBI" id="CHEBI:15378"/>
        <dbReference type="ChEBI" id="CHEBI:16526"/>
        <dbReference type="ChEBI" id="CHEBI:32682"/>
        <dbReference type="ChEBI" id="CHEBI:58145"/>
        <dbReference type="EC" id="4.1.1.19"/>
    </reaction>
</comment>
<comment type="cofactor">
    <cofactor evidence="1">
        <name>pyruvate</name>
        <dbReference type="ChEBI" id="CHEBI:15361"/>
    </cofactor>
    <text evidence="1">Binds 1 pyruvoyl group covalently per subunit.</text>
</comment>
<comment type="pathway">
    <text evidence="1">Amine and polyamine biosynthesis; agmatine biosynthesis; agmatine from L-arginine: step 1/1.</text>
</comment>
<comment type="subunit">
    <text evidence="1">Heterooctamer of four alpha and four beta chains arranged as a tetramer of alpha/beta heterodimers.</text>
</comment>
<comment type="PTM">
    <text evidence="1">Is synthesized initially as an inactive proenzyme. Formation of the active enzyme involves a self-maturation process in which the active site pyruvoyl group is generated from an internal serine residue via an autocatalytic post-translational modification. Two non-identical subunits are generated from the proenzyme in this reaction, and the pyruvate is formed at the N-terminus of the alpha chain, which is derived from the carboxyl end of the proenzyme. The post-translation cleavage follows an unusual pathway, termed non-hydrolytic serinolysis, in which the side chain hydroxyl group of the serine supplies its oxygen atom to form the C-terminus of the beta chain, while the remainder of the serine residue undergoes an oxidative deamination to produce ammonia and the pyruvoyl group blocking the N-terminus of the alpha chain.</text>
</comment>
<comment type="similarity">
    <text evidence="1">Belongs to the prokaryotic AdoMetDC family. Type 1 subfamily.</text>
</comment>
<dbReference type="EC" id="4.1.1.19" evidence="1"/>
<dbReference type="EMBL" id="AE009441">
    <property type="protein sequence ID" value="AAL63699.1"/>
    <property type="molecule type" value="Genomic_DNA"/>
</dbReference>
<dbReference type="SMR" id="Q8ZWK3"/>
<dbReference type="FunCoup" id="Q8ZWK3">
    <property type="interactions" value="17"/>
</dbReference>
<dbReference type="STRING" id="178306.PAE1749"/>
<dbReference type="EnsemblBacteria" id="AAL63699">
    <property type="protein sequence ID" value="AAL63699"/>
    <property type="gene ID" value="PAE1749"/>
</dbReference>
<dbReference type="KEGG" id="pai:PAE1749"/>
<dbReference type="PATRIC" id="fig|178306.9.peg.1290"/>
<dbReference type="eggNOG" id="arCOG00279">
    <property type="taxonomic scope" value="Archaea"/>
</dbReference>
<dbReference type="HOGENOM" id="CLU_125470_2_1_2"/>
<dbReference type="InParanoid" id="Q8ZWK3"/>
<dbReference type="UniPathway" id="UPA00186">
    <property type="reaction ID" value="UER00284"/>
</dbReference>
<dbReference type="Proteomes" id="UP000002439">
    <property type="component" value="Chromosome"/>
</dbReference>
<dbReference type="GO" id="GO:0005829">
    <property type="term" value="C:cytosol"/>
    <property type="evidence" value="ECO:0000318"/>
    <property type="project" value="GO_Central"/>
</dbReference>
<dbReference type="GO" id="GO:0004014">
    <property type="term" value="F:adenosylmethionine decarboxylase activity"/>
    <property type="evidence" value="ECO:0000318"/>
    <property type="project" value="GO_Central"/>
</dbReference>
<dbReference type="GO" id="GO:0008792">
    <property type="term" value="F:arginine decarboxylase activity"/>
    <property type="evidence" value="ECO:0007669"/>
    <property type="project" value="UniProtKB-UniRule"/>
</dbReference>
<dbReference type="GO" id="GO:0006527">
    <property type="term" value="P:arginine catabolic process"/>
    <property type="evidence" value="ECO:0007669"/>
    <property type="project" value="UniProtKB-UniRule"/>
</dbReference>
<dbReference type="GO" id="GO:0008295">
    <property type="term" value="P:spermidine biosynthetic process"/>
    <property type="evidence" value="ECO:0000318"/>
    <property type="project" value="GO_Central"/>
</dbReference>
<dbReference type="FunFam" id="3.60.90.10:FF:000005">
    <property type="entry name" value="Arginine decarboxylase proenzyme"/>
    <property type="match status" value="1"/>
</dbReference>
<dbReference type="Gene3D" id="3.60.90.10">
    <property type="entry name" value="S-adenosylmethionine decarboxylase"/>
    <property type="match status" value="1"/>
</dbReference>
<dbReference type="HAMAP" id="MF_00464">
    <property type="entry name" value="AdoMetDC_1"/>
    <property type="match status" value="1"/>
</dbReference>
<dbReference type="HAMAP" id="MF_01298">
    <property type="entry name" value="ArgDC"/>
    <property type="match status" value="1"/>
</dbReference>
<dbReference type="InterPro" id="IPR003826">
    <property type="entry name" value="AdoMetDC_fam_prok"/>
</dbReference>
<dbReference type="InterPro" id="IPR027549">
    <property type="entry name" value="ArgDC"/>
</dbReference>
<dbReference type="InterPro" id="IPR016067">
    <property type="entry name" value="S-AdoMet_deCO2ase_core"/>
</dbReference>
<dbReference type="InterPro" id="IPR017716">
    <property type="entry name" value="S-AdoMet_deCOase_pro-enz"/>
</dbReference>
<dbReference type="NCBIfam" id="TIGR03330">
    <property type="entry name" value="SAM_DCase_Bsu"/>
    <property type="match status" value="1"/>
</dbReference>
<dbReference type="PANTHER" id="PTHR33866">
    <property type="entry name" value="S-ADENOSYLMETHIONINE DECARBOXYLASE PROENZYME"/>
    <property type="match status" value="1"/>
</dbReference>
<dbReference type="PANTHER" id="PTHR33866:SF2">
    <property type="entry name" value="S-ADENOSYLMETHIONINE DECARBOXYLASE PROENZYME"/>
    <property type="match status" value="1"/>
</dbReference>
<dbReference type="Pfam" id="PF02675">
    <property type="entry name" value="AdoMet_dc"/>
    <property type="match status" value="1"/>
</dbReference>
<dbReference type="SUPFAM" id="SSF56276">
    <property type="entry name" value="S-adenosylmethionine decarboxylase"/>
    <property type="match status" value="1"/>
</dbReference>
<organism>
    <name type="scientific">Pyrobaculum aerophilum (strain ATCC 51768 / DSM 7523 / JCM 9630 / CIP 104966 / NBRC 100827 / IM2)</name>
    <dbReference type="NCBI Taxonomy" id="178306"/>
    <lineage>
        <taxon>Archaea</taxon>
        <taxon>Thermoproteota</taxon>
        <taxon>Thermoprotei</taxon>
        <taxon>Thermoproteales</taxon>
        <taxon>Thermoproteaceae</taxon>
        <taxon>Pyrobaculum</taxon>
    </lineage>
</organism>
<proteinExistence type="inferred from homology"/>
<gene>
    <name type="ordered locus">PAE1749</name>
</gene>
<name>ARGDC_PYRAE</name>
<evidence type="ECO:0000255" key="1">
    <source>
        <dbReference type="HAMAP-Rule" id="MF_01298"/>
    </source>
</evidence>
<keyword id="KW-0068">Autocatalytic cleavage</keyword>
<keyword id="KW-0210">Decarboxylase</keyword>
<keyword id="KW-0456">Lyase</keyword>
<keyword id="KW-0620">Polyamine biosynthesis</keyword>
<keyword id="KW-0670">Pyruvate</keyword>
<keyword id="KW-1185">Reference proteome</keyword>
<keyword id="KW-0704">Schiff base</keyword>
<keyword id="KW-0865">Zymogen</keyword>
<sequence>MQATTQIKTPVVGKHVYGELYGVDEALLKDEERLRKIVIEAAHIAKMHLVEVNSWRFKGGDKEGVSVIALVLESHIAIHTWPVYNFATVDVYTCGEHSDPMTAFRYIVSQLSPKRFTVNYADRSFK</sequence>
<accession>Q8ZWK3</accession>
<protein>
    <recommendedName>
        <fullName evidence="1">Arginine decarboxylase proenzyme</fullName>
        <shortName evidence="1">ADC</shortName>
        <shortName evidence="1">ArgDC</shortName>
        <ecNumber evidence="1">4.1.1.19</ecNumber>
    </recommendedName>
    <alternativeName>
        <fullName evidence="1">Pyruvoyl-dependent arginine decarboxylase</fullName>
    </alternativeName>
    <component>
        <recommendedName>
            <fullName evidence="1">Arginine decarboxylase beta chain</fullName>
        </recommendedName>
    </component>
    <component>
        <recommendedName>
            <fullName evidence="1">Arginine decarboxylase alpha chain</fullName>
        </recommendedName>
    </component>
</protein>
<reference key="1">
    <citation type="journal article" date="2002" name="Proc. Natl. Acad. Sci. U.S.A.">
        <title>Genome sequence of the hyperthermophilic crenarchaeon Pyrobaculum aerophilum.</title>
        <authorList>
            <person name="Fitz-Gibbon S.T."/>
            <person name="Ladner H."/>
            <person name="Kim U.-J."/>
            <person name="Stetter K.O."/>
            <person name="Simon M.I."/>
            <person name="Miller J.H."/>
        </authorList>
    </citation>
    <scope>NUCLEOTIDE SEQUENCE [LARGE SCALE GENOMIC DNA]</scope>
    <source>
        <strain>ATCC 51768 / DSM 7523 / JCM 9630 / CIP 104966 / NBRC 100827 / IM2</strain>
    </source>
</reference>
<feature type="chain" id="PRO_0000030141" description="Arginine decarboxylase beta chain" evidence="1">
    <location>
        <begin position="1"/>
        <end position="73"/>
    </location>
</feature>
<feature type="chain" id="PRO_0000030142" description="Arginine decarboxylase alpha chain" evidence="1">
    <location>
        <begin position="74"/>
        <end position="126"/>
    </location>
</feature>
<feature type="active site" description="Schiff-base intermediate with substrate; via pyruvic acid" evidence="1">
    <location>
        <position position="74"/>
    </location>
</feature>
<feature type="active site" description="Proton acceptor; for processing activity" evidence="1">
    <location>
        <position position="79"/>
    </location>
</feature>
<feature type="active site" description="Proton donor; for catalytic activity" evidence="1">
    <location>
        <position position="94"/>
    </location>
</feature>
<feature type="site" description="Cleavage (non-hydrolytic); by autolysis" evidence="1">
    <location>
        <begin position="73"/>
        <end position="74"/>
    </location>
</feature>
<feature type="modified residue" description="Pyruvic acid (Ser); by autocatalysis" evidence="1">
    <location>
        <position position="74"/>
    </location>
</feature>